<proteinExistence type="inferred from homology"/>
<protein>
    <recommendedName>
        <fullName>HTH-type transcriptional repressor CytR</fullName>
    </recommendedName>
</protein>
<keyword id="KW-0238">DNA-binding</keyword>
<keyword id="KW-1185">Reference proteome</keyword>
<keyword id="KW-0678">Repressor</keyword>
<keyword id="KW-0804">Transcription</keyword>
<keyword id="KW-0805">Transcription regulation</keyword>
<gene>
    <name type="primary">cytR</name>
    <name type="ordered locus">Z5481</name>
    <name type="ordered locus">ECs4861</name>
</gene>
<comment type="function">
    <text evidence="1">This protein negatively controls the transcription initiation of genes such as deoCABD, udp, and cdd encoding catabolizing enzymes and nupC, nupG, and tsx encoding transporting and pore-forming proteins. Binds cytidine and adenosine as effectors (By similarity).</text>
</comment>
<feature type="chain" id="PRO_0000107939" description="HTH-type transcriptional repressor CytR">
    <location>
        <begin position="1"/>
        <end position="341"/>
    </location>
</feature>
<feature type="domain" description="HTH lacI-type" evidence="2">
    <location>
        <begin position="10"/>
        <end position="64"/>
    </location>
</feature>
<feature type="DNA-binding region" description="H-T-H motif" evidence="2">
    <location>
        <begin position="12"/>
        <end position="31"/>
    </location>
</feature>
<sequence>MKAKKQETAATMKDVALKAKVSTATVSRALMNPDKVSQATRNRVEKAAREVGYLPQPMGRNVKRNESRTILVIVPDICDPFFSEIIRGIEVTAANHGYLVLIGDCAHQNQQEKTFIDLIITKQIDGMLLLGSRLPFDASIEEQRNLPPMVMANEFAPELELPTVHIDNLTAAFDAVNYLYEQGHKRIGCIAGPEEMPLCHYRLQGYVQALRRCGIMVDPQYIARGDFTFEAGSKAMQQLLDLPQPPTAVFCHSDVMALGALSQAKRQGLKVPEDLSIIGFDNIDLTQFCDPPLTTIAQPRYEIGREAMLLLLDQMQGQHVGSGSRLMDCELIIRGSTRALP</sequence>
<dbReference type="EMBL" id="AE005174">
    <property type="protein sequence ID" value="AAG59129.1"/>
    <property type="molecule type" value="Genomic_DNA"/>
</dbReference>
<dbReference type="EMBL" id="BA000007">
    <property type="protein sequence ID" value="BAB38284.1"/>
    <property type="molecule type" value="Genomic_DNA"/>
</dbReference>
<dbReference type="PIR" id="E86083">
    <property type="entry name" value="E86083"/>
</dbReference>
<dbReference type="PIR" id="E91236">
    <property type="entry name" value="E91236"/>
</dbReference>
<dbReference type="RefSeq" id="NP_312888.1">
    <property type="nucleotide sequence ID" value="NC_002695.1"/>
</dbReference>
<dbReference type="RefSeq" id="WP_000644904.1">
    <property type="nucleotide sequence ID" value="NZ_VOAI01000016.1"/>
</dbReference>
<dbReference type="BMRB" id="P0ACN9"/>
<dbReference type="SMR" id="P0ACN9"/>
<dbReference type="STRING" id="155864.Z5481"/>
<dbReference type="GeneID" id="915035"/>
<dbReference type="GeneID" id="93777964"/>
<dbReference type="KEGG" id="ece:Z5481"/>
<dbReference type="KEGG" id="ecs:ECs_4861"/>
<dbReference type="PATRIC" id="fig|386585.9.peg.5083"/>
<dbReference type="eggNOG" id="COG1609">
    <property type="taxonomic scope" value="Bacteria"/>
</dbReference>
<dbReference type="HOGENOM" id="CLU_037628_6_0_6"/>
<dbReference type="OMA" id="MVFVDRW"/>
<dbReference type="Proteomes" id="UP000000558">
    <property type="component" value="Chromosome"/>
</dbReference>
<dbReference type="Proteomes" id="UP000002519">
    <property type="component" value="Chromosome"/>
</dbReference>
<dbReference type="GO" id="GO:0003700">
    <property type="term" value="F:DNA-binding transcription factor activity"/>
    <property type="evidence" value="ECO:0007669"/>
    <property type="project" value="TreeGrafter"/>
</dbReference>
<dbReference type="GO" id="GO:0000976">
    <property type="term" value="F:transcription cis-regulatory region binding"/>
    <property type="evidence" value="ECO:0007669"/>
    <property type="project" value="TreeGrafter"/>
</dbReference>
<dbReference type="CDD" id="cd01392">
    <property type="entry name" value="HTH_LacI"/>
    <property type="match status" value="1"/>
</dbReference>
<dbReference type="CDD" id="cd06284">
    <property type="entry name" value="PBP1_LacI-like"/>
    <property type="match status" value="1"/>
</dbReference>
<dbReference type="FunFam" id="1.10.260.40:FF:000012">
    <property type="entry name" value="HTH-type transcriptional regulator GntR"/>
    <property type="match status" value="1"/>
</dbReference>
<dbReference type="FunFam" id="3.40.50.2300:FF:000116">
    <property type="entry name" value="HTH-type transcriptional repressor CytR"/>
    <property type="match status" value="1"/>
</dbReference>
<dbReference type="Gene3D" id="3.40.50.2300">
    <property type="match status" value="2"/>
</dbReference>
<dbReference type="Gene3D" id="1.10.260.40">
    <property type="entry name" value="lambda repressor-like DNA-binding domains"/>
    <property type="match status" value="1"/>
</dbReference>
<dbReference type="InterPro" id="IPR000843">
    <property type="entry name" value="HTH_LacI"/>
</dbReference>
<dbReference type="InterPro" id="IPR046335">
    <property type="entry name" value="LacI/GalR-like_sensor"/>
</dbReference>
<dbReference type="InterPro" id="IPR010982">
    <property type="entry name" value="Lambda_DNA-bd_dom_sf"/>
</dbReference>
<dbReference type="InterPro" id="IPR028082">
    <property type="entry name" value="Peripla_BP_I"/>
</dbReference>
<dbReference type="NCBIfam" id="NF008269">
    <property type="entry name" value="PRK11041.1"/>
    <property type="match status" value="1"/>
</dbReference>
<dbReference type="PANTHER" id="PTHR30146:SF151">
    <property type="entry name" value="HTH-TYPE TRANSCRIPTIONAL REPRESSOR CYTR"/>
    <property type="match status" value="1"/>
</dbReference>
<dbReference type="PANTHER" id="PTHR30146">
    <property type="entry name" value="LACI-RELATED TRANSCRIPTIONAL REPRESSOR"/>
    <property type="match status" value="1"/>
</dbReference>
<dbReference type="Pfam" id="PF00356">
    <property type="entry name" value="LacI"/>
    <property type="match status" value="1"/>
</dbReference>
<dbReference type="Pfam" id="PF13377">
    <property type="entry name" value="Peripla_BP_3"/>
    <property type="match status" value="1"/>
</dbReference>
<dbReference type="SMART" id="SM00354">
    <property type="entry name" value="HTH_LACI"/>
    <property type="match status" value="1"/>
</dbReference>
<dbReference type="SUPFAM" id="SSF47413">
    <property type="entry name" value="lambda repressor-like DNA-binding domains"/>
    <property type="match status" value="1"/>
</dbReference>
<dbReference type="SUPFAM" id="SSF53822">
    <property type="entry name" value="Periplasmic binding protein-like I"/>
    <property type="match status" value="1"/>
</dbReference>
<dbReference type="PROSITE" id="PS00356">
    <property type="entry name" value="HTH_LACI_1"/>
    <property type="match status" value="1"/>
</dbReference>
<dbReference type="PROSITE" id="PS50932">
    <property type="entry name" value="HTH_LACI_2"/>
    <property type="match status" value="1"/>
</dbReference>
<organism>
    <name type="scientific">Escherichia coli O157:H7</name>
    <dbReference type="NCBI Taxonomy" id="83334"/>
    <lineage>
        <taxon>Bacteria</taxon>
        <taxon>Pseudomonadati</taxon>
        <taxon>Pseudomonadota</taxon>
        <taxon>Gammaproteobacteria</taxon>
        <taxon>Enterobacterales</taxon>
        <taxon>Enterobacteriaceae</taxon>
        <taxon>Escherichia</taxon>
    </lineage>
</organism>
<accession>P0ACN9</accession>
<accession>P06964</accession>
<name>CYTR_ECO57</name>
<reference key="1">
    <citation type="journal article" date="2001" name="Nature">
        <title>Genome sequence of enterohaemorrhagic Escherichia coli O157:H7.</title>
        <authorList>
            <person name="Perna N.T."/>
            <person name="Plunkett G. III"/>
            <person name="Burland V."/>
            <person name="Mau B."/>
            <person name="Glasner J.D."/>
            <person name="Rose D.J."/>
            <person name="Mayhew G.F."/>
            <person name="Evans P.S."/>
            <person name="Gregor J."/>
            <person name="Kirkpatrick H.A."/>
            <person name="Posfai G."/>
            <person name="Hackett J."/>
            <person name="Klink S."/>
            <person name="Boutin A."/>
            <person name="Shao Y."/>
            <person name="Miller L."/>
            <person name="Grotbeck E.J."/>
            <person name="Davis N.W."/>
            <person name="Lim A."/>
            <person name="Dimalanta E.T."/>
            <person name="Potamousis K."/>
            <person name="Apodaca J."/>
            <person name="Anantharaman T.S."/>
            <person name="Lin J."/>
            <person name="Yen G."/>
            <person name="Schwartz D.C."/>
            <person name="Welch R.A."/>
            <person name="Blattner F.R."/>
        </authorList>
    </citation>
    <scope>NUCLEOTIDE SEQUENCE [LARGE SCALE GENOMIC DNA]</scope>
    <source>
        <strain>O157:H7 / EDL933 / ATCC 700927 / EHEC</strain>
    </source>
</reference>
<reference key="2">
    <citation type="journal article" date="2001" name="DNA Res.">
        <title>Complete genome sequence of enterohemorrhagic Escherichia coli O157:H7 and genomic comparison with a laboratory strain K-12.</title>
        <authorList>
            <person name="Hayashi T."/>
            <person name="Makino K."/>
            <person name="Ohnishi M."/>
            <person name="Kurokawa K."/>
            <person name="Ishii K."/>
            <person name="Yokoyama K."/>
            <person name="Han C.-G."/>
            <person name="Ohtsubo E."/>
            <person name="Nakayama K."/>
            <person name="Murata T."/>
            <person name="Tanaka M."/>
            <person name="Tobe T."/>
            <person name="Iida T."/>
            <person name="Takami H."/>
            <person name="Honda T."/>
            <person name="Sasakawa C."/>
            <person name="Ogasawara N."/>
            <person name="Yasunaga T."/>
            <person name="Kuhara S."/>
            <person name="Shiba T."/>
            <person name="Hattori M."/>
            <person name="Shinagawa H."/>
        </authorList>
    </citation>
    <scope>NUCLEOTIDE SEQUENCE [LARGE SCALE GENOMIC DNA]</scope>
    <source>
        <strain>O157:H7 / Sakai / RIMD 0509952 / EHEC</strain>
    </source>
</reference>
<evidence type="ECO:0000250" key="1"/>
<evidence type="ECO:0000255" key="2">
    <source>
        <dbReference type="PROSITE-ProRule" id="PRU00111"/>
    </source>
</evidence>